<name>GLGC_PECCP</name>
<proteinExistence type="inferred from homology"/>
<evidence type="ECO:0000255" key="1">
    <source>
        <dbReference type="HAMAP-Rule" id="MF_00624"/>
    </source>
</evidence>
<comment type="function">
    <text evidence="1">Involved in the biosynthesis of ADP-glucose, a building block required for the elongation reactions to produce glycogen. Catalyzes the reaction between ATP and alpha-D-glucose 1-phosphate (G1P) to produce pyrophosphate and ADP-Glc.</text>
</comment>
<comment type="catalytic activity">
    <reaction evidence="1">
        <text>alpha-D-glucose 1-phosphate + ATP + H(+) = ADP-alpha-D-glucose + diphosphate</text>
        <dbReference type="Rhea" id="RHEA:12120"/>
        <dbReference type="ChEBI" id="CHEBI:15378"/>
        <dbReference type="ChEBI" id="CHEBI:30616"/>
        <dbReference type="ChEBI" id="CHEBI:33019"/>
        <dbReference type="ChEBI" id="CHEBI:57498"/>
        <dbReference type="ChEBI" id="CHEBI:58601"/>
        <dbReference type="EC" id="2.7.7.27"/>
    </reaction>
</comment>
<comment type="pathway">
    <text evidence="1">Glycan biosynthesis; glycogen biosynthesis.</text>
</comment>
<comment type="subunit">
    <text evidence="1">Homotetramer.</text>
</comment>
<comment type="similarity">
    <text evidence="1">Belongs to the bacterial/plant glucose-1-phosphate adenylyltransferase family.</text>
</comment>
<keyword id="KW-0067">ATP-binding</keyword>
<keyword id="KW-0119">Carbohydrate metabolism</keyword>
<keyword id="KW-0320">Glycogen biosynthesis</keyword>
<keyword id="KW-0321">Glycogen metabolism</keyword>
<keyword id="KW-0547">Nucleotide-binding</keyword>
<keyword id="KW-0548">Nucleotidyltransferase</keyword>
<keyword id="KW-0808">Transferase</keyword>
<reference key="1">
    <citation type="submission" date="2009-07" db="EMBL/GenBank/DDBJ databases">
        <title>Complete sequence of Pectobacterium carotovorum subsp. carotovorum PC1.</title>
        <authorList>
            <consortium name="US DOE Joint Genome Institute"/>
            <person name="Lucas S."/>
            <person name="Copeland A."/>
            <person name="Lapidus A."/>
            <person name="Glavina del Rio T."/>
            <person name="Tice H."/>
            <person name="Bruce D."/>
            <person name="Goodwin L."/>
            <person name="Pitluck S."/>
            <person name="Munk A.C."/>
            <person name="Brettin T."/>
            <person name="Detter J.C."/>
            <person name="Han C."/>
            <person name="Tapia R."/>
            <person name="Larimer F."/>
            <person name="Land M."/>
            <person name="Hauser L."/>
            <person name="Kyrpides N."/>
            <person name="Mikhailova N."/>
            <person name="Balakrishnan V."/>
            <person name="Glasner J."/>
            <person name="Perna N.T."/>
        </authorList>
    </citation>
    <scope>NUCLEOTIDE SEQUENCE [LARGE SCALE GENOMIC DNA]</scope>
    <source>
        <strain>PC1</strain>
    </source>
</reference>
<sequence>MVNNDKHDPLMLARQLPLKSVALILAGGRGTRLKGLTALRAKPAVHFGGKFRIIDFALSNCLNSGIRRIGVITQYQSHTLVQHIQRGWSFLNAEMNEFVDLLPAQQRNATDHWYRGTADAVCQNLDIIRRYRAEYVVILAGDHIYKMDYSRMLIDHVEKGAECTVACLPVPLEEASAFGVMSVDKQHRILDFAEKPDNPTPMPDNPDMALASMGIYVFNADYLYQLLDADHNTPDSNHDFGQDLIPKIVSQRLAWAHPFTLSCVTSGEDENQYWRDVGTLEAYWRANLDLASVTPELDVYDRHWPIRSAIESLPPAKFVQDRSGSHGMTMNSLVSGGCIVSGSVVTHSVLFPRVRVNSFCSIDSTVILPDVNVGRSCRLRRCVIDRACNLPEGMVIGENAEEDSRRFYRSEEGIVLVTRSMLEKL</sequence>
<accession>C6DH77</accession>
<dbReference type="EC" id="2.7.7.27" evidence="1"/>
<dbReference type="EMBL" id="CP001657">
    <property type="protein sequence ID" value="ACT14950.1"/>
    <property type="molecule type" value="Genomic_DNA"/>
</dbReference>
<dbReference type="RefSeq" id="WP_015842031.1">
    <property type="nucleotide sequence ID" value="NC_012917.1"/>
</dbReference>
<dbReference type="SMR" id="C6DH77"/>
<dbReference type="STRING" id="561230.PC1_3935"/>
<dbReference type="KEGG" id="pct:PC1_3935"/>
<dbReference type="eggNOG" id="COG0448">
    <property type="taxonomic scope" value="Bacteria"/>
</dbReference>
<dbReference type="HOGENOM" id="CLU_029499_14_1_6"/>
<dbReference type="OrthoDB" id="9801810at2"/>
<dbReference type="UniPathway" id="UPA00164"/>
<dbReference type="Proteomes" id="UP000002736">
    <property type="component" value="Chromosome"/>
</dbReference>
<dbReference type="GO" id="GO:0005524">
    <property type="term" value="F:ATP binding"/>
    <property type="evidence" value="ECO:0007669"/>
    <property type="project" value="UniProtKB-KW"/>
</dbReference>
<dbReference type="GO" id="GO:0008878">
    <property type="term" value="F:glucose-1-phosphate adenylyltransferase activity"/>
    <property type="evidence" value="ECO:0007669"/>
    <property type="project" value="UniProtKB-UniRule"/>
</dbReference>
<dbReference type="GO" id="GO:0005978">
    <property type="term" value="P:glycogen biosynthetic process"/>
    <property type="evidence" value="ECO:0007669"/>
    <property type="project" value="UniProtKB-UniRule"/>
</dbReference>
<dbReference type="CDD" id="cd02508">
    <property type="entry name" value="ADP_Glucose_PP"/>
    <property type="match status" value="1"/>
</dbReference>
<dbReference type="CDD" id="cd04651">
    <property type="entry name" value="LbH_G1P_AT_C"/>
    <property type="match status" value="1"/>
</dbReference>
<dbReference type="FunFam" id="3.90.550.10:FF:000014">
    <property type="entry name" value="Glucose-1-phosphate adenylyltransferase"/>
    <property type="match status" value="1"/>
</dbReference>
<dbReference type="Gene3D" id="2.160.10.10">
    <property type="entry name" value="Hexapeptide repeat proteins"/>
    <property type="match status" value="1"/>
</dbReference>
<dbReference type="Gene3D" id="3.90.550.10">
    <property type="entry name" value="Spore Coat Polysaccharide Biosynthesis Protein SpsA, Chain A"/>
    <property type="match status" value="1"/>
</dbReference>
<dbReference type="HAMAP" id="MF_00624">
    <property type="entry name" value="GlgC"/>
    <property type="match status" value="1"/>
</dbReference>
<dbReference type="InterPro" id="IPR011831">
    <property type="entry name" value="ADP-Glc_PPase"/>
</dbReference>
<dbReference type="InterPro" id="IPR005836">
    <property type="entry name" value="ADP_Glu_pyroP_CS"/>
</dbReference>
<dbReference type="InterPro" id="IPR023049">
    <property type="entry name" value="GlgC_bac"/>
</dbReference>
<dbReference type="InterPro" id="IPR056818">
    <property type="entry name" value="GlmU/GlgC-like_hexapep"/>
</dbReference>
<dbReference type="InterPro" id="IPR005835">
    <property type="entry name" value="NTP_transferase_dom"/>
</dbReference>
<dbReference type="InterPro" id="IPR029044">
    <property type="entry name" value="Nucleotide-diphossugar_trans"/>
</dbReference>
<dbReference type="InterPro" id="IPR011004">
    <property type="entry name" value="Trimer_LpxA-like_sf"/>
</dbReference>
<dbReference type="NCBIfam" id="TIGR02091">
    <property type="entry name" value="glgC"/>
    <property type="match status" value="1"/>
</dbReference>
<dbReference type="NCBIfam" id="NF001947">
    <property type="entry name" value="PRK00725.1"/>
    <property type="match status" value="1"/>
</dbReference>
<dbReference type="NCBIfam" id="NF002023">
    <property type="entry name" value="PRK00844.1"/>
    <property type="match status" value="1"/>
</dbReference>
<dbReference type="PANTHER" id="PTHR43523:SF2">
    <property type="entry name" value="GLUCOSE-1-PHOSPHATE ADENYLYLTRANSFERASE"/>
    <property type="match status" value="1"/>
</dbReference>
<dbReference type="PANTHER" id="PTHR43523">
    <property type="entry name" value="GLUCOSE-1-PHOSPHATE ADENYLYLTRANSFERASE-RELATED"/>
    <property type="match status" value="1"/>
</dbReference>
<dbReference type="Pfam" id="PF24894">
    <property type="entry name" value="Hexapep_GlmU"/>
    <property type="match status" value="1"/>
</dbReference>
<dbReference type="Pfam" id="PF00483">
    <property type="entry name" value="NTP_transferase"/>
    <property type="match status" value="1"/>
</dbReference>
<dbReference type="SUPFAM" id="SSF53448">
    <property type="entry name" value="Nucleotide-diphospho-sugar transferases"/>
    <property type="match status" value="1"/>
</dbReference>
<dbReference type="SUPFAM" id="SSF51161">
    <property type="entry name" value="Trimeric LpxA-like enzymes"/>
    <property type="match status" value="1"/>
</dbReference>
<dbReference type="PROSITE" id="PS00808">
    <property type="entry name" value="ADP_GLC_PYROPHOSPH_1"/>
    <property type="match status" value="1"/>
</dbReference>
<dbReference type="PROSITE" id="PS00809">
    <property type="entry name" value="ADP_GLC_PYROPHOSPH_2"/>
    <property type="match status" value="1"/>
</dbReference>
<dbReference type="PROSITE" id="PS00810">
    <property type="entry name" value="ADP_GLC_PYROPHOSPH_3"/>
    <property type="match status" value="1"/>
</dbReference>
<feature type="chain" id="PRO_1000212302" description="Glucose-1-phosphate adenylyltransferase">
    <location>
        <begin position="1"/>
        <end position="425"/>
    </location>
</feature>
<feature type="binding site" evidence="1">
    <location>
        <position position="114"/>
    </location>
    <ligand>
        <name>alpha-D-glucose 1-phosphate</name>
        <dbReference type="ChEBI" id="CHEBI:58601"/>
    </ligand>
</feature>
<feature type="binding site" evidence="1">
    <location>
        <position position="179"/>
    </location>
    <ligand>
        <name>alpha-D-glucose 1-phosphate</name>
        <dbReference type="ChEBI" id="CHEBI:58601"/>
    </ligand>
</feature>
<feature type="binding site" evidence="1">
    <location>
        <begin position="194"/>
        <end position="195"/>
    </location>
    <ligand>
        <name>alpha-D-glucose 1-phosphate</name>
        <dbReference type="ChEBI" id="CHEBI:58601"/>
    </ligand>
</feature>
<feature type="binding site" evidence="1">
    <location>
        <position position="212"/>
    </location>
    <ligand>
        <name>alpha-D-glucose 1-phosphate</name>
        <dbReference type="ChEBI" id="CHEBI:58601"/>
    </ligand>
</feature>
<protein>
    <recommendedName>
        <fullName evidence="1">Glucose-1-phosphate adenylyltransferase</fullName>
        <ecNumber evidence="1">2.7.7.27</ecNumber>
    </recommendedName>
    <alternativeName>
        <fullName evidence="1">ADP-glucose pyrophosphorylase</fullName>
        <shortName evidence="1">ADPGlc PPase</shortName>
    </alternativeName>
    <alternativeName>
        <fullName evidence="1">ADP-glucose synthase</fullName>
    </alternativeName>
</protein>
<gene>
    <name evidence="1" type="primary">glgC</name>
    <name type="ordered locus">PC1_3935</name>
</gene>
<organism>
    <name type="scientific">Pectobacterium carotovorum subsp. carotovorum (strain PC1)</name>
    <dbReference type="NCBI Taxonomy" id="561230"/>
    <lineage>
        <taxon>Bacteria</taxon>
        <taxon>Pseudomonadati</taxon>
        <taxon>Pseudomonadota</taxon>
        <taxon>Gammaproteobacteria</taxon>
        <taxon>Enterobacterales</taxon>
        <taxon>Pectobacteriaceae</taxon>
        <taxon>Pectobacterium</taxon>
    </lineage>
</organism>